<comment type="function">
    <text evidence="1">Catalyzes the NADPH-dependent rearrangement and reduction of 1-deoxy-D-xylulose-5-phosphate (DXP) to 2-C-methyl-D-erythritol 4-phosphate (MEP).</text>
</comment>
<comment type="catalytic activity">
    <reaction evidence="1">
        <text>2-C-methyl-D-erythritol 4-phosphate + NADP(+) = 1-deoxy-D-xylulose 5-phosphate + NADPH + H(+)</text>
        <dbReference type="Rhea" id="RHEA:13717"/>
        <dbReference type="ChEBI" id="CHEBI:15378"/>
        <dbReference type="ChEBI" id="CHEBI:57783"/>
        <dbReference type="ChEBI" id="CHEBI:57792"/>
        <dbReference type="ChEBI" id="CHEBI:58262"/>
        <dbReference type="ChEBI" id="CHEBI:58349"/>
        <dbReference type="EC" id="1.1.1.267"/>
    </reaction>
    <physiologicalReaction direction="right-to-left" evidence="1">
        <dbReference type="Rhea" id="RHEA:13719"/>
    </physiologicalReaction>
</comment>
<comment type="cofactor">
    <cofactor evidence="1">
        <name>Mg(2+)</name>
        <dbReference type="ChEBI" id="CHEBI:18420"/>
    </cofactor>
    <cofactor evidence="1">
        <name>Mn(2+)</name>
        <dbReference type="ChEBI" id="CHEBI:29035"/>
    </cofactor>
</comment>
<comment type="pathway">
    <text evidence="1">Isoprenoid biosynthesis; isopentenyl diphosphate biosynthesis via DXP pathway; isopentenyl diphosphate from 1-deoxy-D-xylulose 5-phosphate: step 1/6.</text>
</comment>
<comment type="similarity">
    <text evidence="1">Belongs to the DXR family.</text>
</comment>
<sequence length="381" mass="41891">MVNRISILGSTGSIGVQTLDVARNLNIKVDGLAANKNIDLLEKQAREFQPKIVAVKDEERARILRDRLSDTDCKVVGGVEGLKMVASIETVETVVTSIVGIAGLIPTMEAIKHKKNIALANKETLVTAGHIVMSEAARMGVKILPVDSEHSAVFQSLMGNNKKDVAKIILTASGGPFRGRKKEELRNVTLREALNHPNWSMGSKITIDSATMMNKGLEVIEAHWLFEIPQDDIEVLVHPQSIIHSMVEYKDGSIIAQLGSPDMRLPIQFALTYPDRKQNNFSKLDIVKIGSLTFEAPDLEAFPCLGLAFEALRAGGTMPAVLNAANEKAVGLFLQEKIRFLDIPEIIEKVMGRHSVKPDPDIDDIIDVDLWARKIVEEIVK</sequence>
<feature type="chain" id="PRO_1000020253" description="1-deoxy-D-xylulose 5-phosphate reductoisomerase">
    <location>
        <begin position="1"/>
        <end position="381"/>
    </location>
</feature>
<feature type="binding site" evidence="1">
    <location>
        <position position="11"/>
    </location>
    <ligand>
        <name>NADPH</name>
        <dbReference type="ChEBI" id="CHEBI:57783"/>
    </ligand>
</feature>
<feature type="binding site" evidence="1">
    <location>
        <position position="12"/>
    </location>
    <ligand>
        <name>NADPH</name>
        <dbReference type="ChEBI" id="CHEBI:57783"/>
    </ligand>
</feature>
<feature type="binding site" evidence="1">
    <location>
        <position position="13"/>
    </location>
    <ligand>
        <name>NADPH</name>
        <dbReference type="ChEBI" id="CHEBI:57783"/>
    </ligand>
</feature>
<feature type="binding site" evidence="1">
    <location>
        <position position="14"/>
    </location>
    <ligand>
        <name>NADPH</name>
        <dbReference type="ChEBI" id="CHEBI:57783"/>
    </ligand>
</feature>
<feature type="binding site" evidence="1">
    <location>
        <position position="36"/>
    </location>
    <ligand>
        <name>NADPH</name>
        <dbReference type="ChEBI" id="CHEBI:57783"/>
    </ligand>
</feature>
<feature type="binding site" evidence="1">
    <location>
        <position position="37"/>
    </location>
    <ligand>
        <name>NADPH</name>
        <dbReference type="ChEBI" id="CHEBI:57783"/>
    </ligand>
</feature>
<feature type="binding site" evidence="1">
    <location>
        <position position="121"/>
    </location>
    <ligand>
        <name>NADPH</name>
        <dbReference type="ChEBI" id="CHEBI:57783"/>
    </ligand>
</feature>
<feature type="binding site" evidence="1">
    <location>
        <position position="122"/>
    </location>
    <ligand>
        <name>1-deoxy-D-xylulose 5-phosphate</name>
        <dbReference type="ChEBI" id="CHEBI:57792"/>
    </ligand>
</feature>
<feature type="binding site" evidence="1">
    <location>
        <position position="123"/>
    </location>
    <ligand>
        <name>NADPH</name>
        <dbReference type="ChEBI" id="CHEBI:57783"/>
    </ligand>
</feature>
<feature type="binding site" evidence="1">
    <location>
        <position position="147"/>
    </location>
    <ligand>
        <name>Mn(2+)</name>
        <dbReference type="ChEBI" id="CHEBI:29035"/>
    </ligand>
</feature>
<feature type="binding site" evidence="1">
    <location>
        <position position="148"/>
    </location>
    <ligand>
        <name>1-deoxy-D-xylulose 5-phosphate</name>
        <dbReference type="ChEBI" id="CHEBI:57792"/>
    </ligand>
</feature>
<feature type="binding site" evidence="1">
    <location>
        <position position="149"/>
    </location>
    <ligand>
        <name>1-deoxy-D-xylulose 5-phosphate</name>
        <dbReference type="ChEBI" id="CHEBI:57792"/>
    </ligand>
</feature>
<feature type="binding site" evidence="1">
    <location>
        <position position="149"/>
    </location>
    <ligand>
        <name>Mn(2+)</name>
        <dbReference type="ChEBI" id="CHEBI:29035"/>
    </ligand>
</feature>
<feature type="binding site" evidence="1">
    <location>
        <position position="173"/>
    </location>
    <ligand>
        <name>1-deoxy-D-xylulose 5-phosphate</name>
        <dbReference type="ChEBI" id="CHEBI:57792"/>
    </ligand>
</feature>
<feature type="binding site" evidence="1">
    <location>
        <position position="196"/>
    </location>
    <ligand>
        <name>1-deoxy-D-xylulose 5-phosphate</name>
        <dbReference type="ChEBI" id="CHEBI:57792"/>
    </ligand>
</feature>
<feature type="binding site" evidence="1">
    <location>
        <position position="202"/>
    </location>
    <ligand>
        <name>NADPH</name>
        <dbReference type="ChEBI" id="CHEBI:57783"/>
    </ligand>
</feature>
<feature type="binding site" evidence="1">
    <location>
        <position position="209"/>
    </location>
    <ligand>
        <name>1-deoxy-D-xylulose 5-phosphate</name>
        <dbReference type="ChEBI" id="CHEBI:57792"/>
    </ligand>
</feature>
<feature type="binding site" evidence="1">
    <location>
        <position position="214"/>
    </location>
    <ligand>
        <name>1-deoxy-D-xylulose 5-phosphate</name>
        <dbReference type="ChEBI" id="CHEBI:57792"/>
    </ligand>
</feature>
<feature type="binding site" evidence="1">
    <location>
        <position position="215"/>
    </location>
    <ligand>
        <name>1-deoxy-D-xylulose 5-phosphate</name>
        <dbReference type="ChEBI" id="CHEBI:57792"/>
    </ligand>
</feature>
<feature type="binding site" evidence="1">
    <location>
        <position position="218"/>
    </location>
    <ligand>
        <name>1-deoxy-D-xylulose 5-phosphate</name>
        <dbReference type="ChEBI" id="CHEBI:57792"/>
    </ligand>
</feature>
<feature type="binding site" evidence="1">
    <location>
        <position position="218"/>
    </location>
    <ligand>
        <name>Mn(2+)</name>
        <dbReference type="ChEBI" id="CHEBI:29035"/>
    </ligand>
</feature>
<reference key="1">
    <citation type="submission" date="2007-02" db="EMBL/GenBank/DDBJ databases">
        <title>Complete sequence of Clostridium thermocellum ATCC 27405.</title>
        <authorList>
            <consortium name="US DOE Joint Genome Institute"/>
            <person name="Copeland A."/>
            <person name="Lucas S."/>
            <person name="Lapidus A."/>
            <person name="Barry K."/>
            <person name="Detter J.C."/>
            <person name="Glavina del Rio T."/>
            <person name="Hammon N."/>
            <person name="Israni S."/>
            <person name="Dalin E."/>
            <person name="Tice H."/>
            <person name="Pitluck S."/>
            <person name="Chertkov O."/>
            <person name="Brettin T."/>
            <person name="Bruce D."/>
            <person name="Han C."/>
            <person name="Tapia R."/>
            <person name="Gilna P."/>
            <person name="Schmutz J."/>
            <person name="Larimer F."/>
            <person name="Land M."/>
            <person name="Hauser L."/>
            <person name="Kyrpides N."/>
            <person name="Mikhailova N."/>
            <person name="Wu J.H.D."/>
            <person name="Newcomb M."/>
            <person name="Richardson P."/>
        </authorList>
    </citation>
    <scope>NUCLEOTIDE SEQUENCE [LARGE SCALE GENOMIC DNA]</scope>
    <source>
        <strain>ATCC 27405 / DSM 1237 / JCM 9322 / NBRC 103400 / NCIMB 10682 / NRRL B-4536 / VPI 7372</strain>
    </source>
</reference>
<evidence type="ECO:0000255" key="1">
    <source>
        <dbReference type="HAMAP-Rule" id="MF_00183"/>
    </source>
</evidence>
<gene>
    <name evidence="1" type="primary">dxr</name>
    <name type="ordered locus">Cthe_0999</name>
</gene>
<protein>
    <recommendedName>
        <fullName evidence="1">1-deoxy-D-xylulose 5-phosphate reductoisomerase</fullName>
        <shortName evidence="1">DXP reductoisomerase</shortName>
        <ecNumber evidence="1">1.1.1.267</ecNumber>
    </recommendedName>
    <alternativeName>
        <fullName evidence="1">1-deoxyxylulose-5-phosphate reductoisomerase</fullName>
    </alternativeName>
    <alternativeName>
        <fullName evidence="1">2-C-methyl-D-erythritol 4-phosphate synthase</fullName>
    </alternativeName>
</protein>
<keyword id="KW-0414">Isoprene biosynthesis</keyword>
<keyword id="KW-0464">Manganese</keyword>
<keyword id="KW-0479">Metal-binding</keyword>
<keyword id="KW-0521">NADP</keyword>
<keyword id="KW-0560">Oxidoreductase</keyword>
<keyword id="KW-1185">Reference proteome</keyword>
<organism>
    <name type="scientific">Acetivibrio thermocellus (strain ATCC 27405 / DSM 1237 / JCM 9322 / NBRC 103400 / NCIMB 10682 / NRRL B-4536 / VPI 7372)</name>
    <name type="common">Clostridium thermocellum</name>
    <dbReference type="NCBI Taxonomy" id="203119"/>
    <lineage>
        <taxon>Bacteria</taxon>
        <taxon>Bacillati</taxon>
        <taxon>Bacillota</taxon>
        <taxon>Clostridia</taxon>
        <taxon>Eubacteriales</taxon>
        <taxon>Oscillospiraceae</taxon>
        <taxon>Acetivibrio</taxon>
    </lineage>
</organism>
<proteinExistence type="inferred from homology"/>
<dbReference type="EC" id="1.1.1.267" evidence="1"/>
<dbReference type="EMBL" id="CP000568">
    <property type="protein sequence ID" value="ABN52231.1"/>
    <property type="molecule type" value="Genomic_DNA"/>
</dbReference>
<dbReference type="RefSeq" id="WP_003515554.1">
    <property type="nucleotide sequence ID" value="NC_009012.1"/>
</dbReference>
<dbReference type="SMR" id="A3DE52"/>
<dbReference type="STRING" id="203119.Cthe_0999"/>
<dbReference type="GeneID" id="35805800"/>
<dbReference type="KEGG" id="cth:Cthe_0999"/>
<dbReference type="eggNOG" id="COG0743">
    <property type="taxonomic scope" value="Bacteria"/>
</dbReference>
<dbReference type="HOGENOM" id="CLU_035714_4_0_9"/>
<dbReference type="OrthoDB" id="9806546at2"/>
<dbReference type="UniPathway" id="UPA00056">
    <property type="reaction ID" value="UER00092"/>
</dbReference>
<dbReference type="Proteomes" id="UP000002145">
    <property type="component" value="Chromosome"/>
</dbReference>
<dbReference type="GO" id="GO:0030604">
    <property type="term" value="F:1-deoxy-D-xylulose-5-phosphate reductoisomerase activity"/>
    <property type="evidence" value="ECO:0007669"/>
    <property type="project" value="UniProtKB-UniRule"/>
</dbReference>
<dbReference type="GO" id="GO:0030145">
    <property type="term" value="F:manganese ion binding"/>
    <property type="evidence" value="ECO:0007669"/>
    <property type="project" value="TreeGrafter"/>
</dbReference>
<dbReference type="GO" id="GO:0070402">
    <property type="term" value="F:NADPH binding"/>
    <property type="evidence" value="ECO:0007669"/>
    <property type="project" value="InterPro"/>
</dbReference>
<dbReference type="GO" id="GO:0051484">
    <property type="term" value="P:isopentenyl diphosphate biosynthetic process, methylerythritol 4-phosphate pathway involved in terpenoid biosynthetic process"/>
    <property type="evidence" value="ECO:0007669"/>
    <property type="project" value="TreeGrafter"/>
</dbReference>
<dbReference type="FunFam" id="3.40.50.720:FF:000045">
    <property type="entry name" value="1-deoxy-D-xylulose 5-phosphate reductoisomerase"/>
    <property type="match status" value="1"/>
</dbReference>
<dbReference type="Gene3D" id="1.10.1740.10">
    <property type="match status" value="1"/>
</dbReference>
<dbReference type="Gene3D" id="3.40.50.720">
    <property type="entry name" value="NAD(P)-binding Rossmann-like Domain"/>
    <property type="match status" value="1"/>
</dbReference>
<dbReference type="HAMAP" id="MF_00183">
    <property type="entry name" value="DXP_reductoisom"/>
    <property type="match status" value="1"/>
</dbReference>
<dbReference type="InterPro" id="IPR003821">
    <property type="entry name" value="DXP_reductoisomerase"/>
</dbReference>
<dbReference type="InterPro" id="IPR013644">
    <property type="entry name" value="DXP_reductoisomerase_C"/>
</dbReference>
<dbReference type="InterPro" id="IPR013512">
    <property type="entry name" value="DXP_reductoisomerase_N"/>
</dbReference>
<dbReference type="InterPro" id="IPR026877">
    <property type="entry name" value="DXPR_C"/>
</dbReference>
<dbReference type="InterPro" id="IPR036169">
    <property type="entry name" value="DXPR_C_sf"/>
</dbReference>
<dbReference type="InterPro" id="IPR036291">
    <property type="entry name" value="NAD(P)-bd_dom_sf"/>
</dbReference>
<dbReference type="NCBIfam" id="TIGR00243">
    <property type="entry name" value="Dxr"/>
    <property type="match status" value="1"/>
</dbReference>
<dbReference type="NCBIfam" id="NF009114">
    <property type="entry name" value="PRK12464.1"/>
    <property type="match status" value="1"/>
</dbReference>
<dbReference type="PANTHER" id="PTHR30525">
    <property type="entry name" value="1-DEOXY-D-XYLULOSE 5-PHOSPHATE REDUCTOISOMERASE"/>
    <property type="match status" value="1"/>
</dbReference>
<dbReference type="PANTHER" id="PTHR30525:SF0">
    <property type="entry name" value="1-DEOXY-D-XYLULOSE 5-PHOSPHATE REDUCTOISOMERASE, CHLOROPLASTIC"/>
    <property type="match status" value="1"/>
</dbReference>
<dbReference type="Pfam" id="PF08436">
    <property type="entry name" value="DXP_redisom_C"/>
    <property type="match status" value="1"/>
</dbReference>
<dbReference type="Pfam" id="PF02670">
    <property type="entry name" value="DXP_reductoisom"/>
    <property type="match status" value="1"/>
</dbReference>
<dbReference type="Pfam" id="PF13288">
    <property type="entry name" value="DXPR_C"/>
    <property type="match status" value="1"/>
</dbReference>
<dbReference type="PIRSF" id="PIRSF006205">
    <property type="entry name" value="Dxp_reductismrs"/>
    <property type="match status" value="1"/>
</dbReference>
<dbReference type="SUPFAM" id="SSF69055">
    <property type="entry name" value="1-deoxy-D-xylulose-5-phosphate reductoisomerase, C-terminal domain"/>
    <property type="match status" value="1"/>
</dbReference>
<dbReference type="SUPFAM" id="SSF55347">
    <property type="entry name" value="Glyceraldehyde-3-phosphate dehydrogenase-like, C-terminal domain"/>
    <property type="match status" value="1"/>
</dbReference>
<dbReference type="SUPFAM" id="SSF51735">
    <property type="entry name" value="NAD(P)-binding Rossmann-fold domains"/>
    <property type="match status" value="1"/>
</dbReference>
<name>DXR_ACET2</name>
<accession>A3DE52</accession>